<proteinExistence type="inferred from homology"/>
<accession>Q1XDH7</accession>
<evidence type="ECO:0000250" key="1"/>
<evidence type="ECO:0000255" key="2">
    <source>
        <dbReference type="HAMAP-Rule" id="MF_01320"/>
    </source>
</evidence>
<evidence type="ECO:0000256" key="3">
    <source>
        <dbReference type="SAM" id="MobiDB-lite"/>
    </source>
</evidence>
<evidence type="ECO:0000305" key="4"/>
<sequence>MAIRLYRAYTPGTRNRTVSTFSEITTDKPEKSLIVKHHFCKGRNNRGVITCRHKGGGHKQQYRLIDFKRNRHNIVAKVASIEYDPNRNARIALLHYLDGEKRYILHPRSLSVGSMVLSGPTAPIEVGNALPLSSIPLGTAVHNIELRPSCGGQIVRAAGTYAQIVAKEGTFVTVKLPSSEVRMIRKECYATIGQVGNIDASNITLGKAGRNRWLGKRPTVRGVVMNPVDHPHGGGEGKSPIGRARPVTPWGKPALGVKTRNPNKYSNPYVLRPVNRIYFIKNLMIYYYVKIYT</sequence>
<gene>
    <name type="primary">rpl2</name>
</gene>
<keyword id="KW-0150">Chloroplast</keyword>
<keyword id="KW-0934">Plastid</keyword>
<keyword id="KW-0687">Ribonucleoprotein</keyword>
<keyword id="KW-0689">Ribosomal protein</keyword>
<dbReference type="EMBL" id="AP006715">
    <property type="protein sequence ID" value="BAE92434.1"/>
    <property type="molecule type" value="Genomic_DNA"/>
</dbReference>
<dbReference type="RefSeq" id="YP_536991.1">
    <property type="nucleotide sequence ID" value="NC_007932.1"/>
</dbReference>
<dbReference type="SMR" id="Q1XDH7"/>
<dbReference type="GeneID" id="3978862"/>
<dbReference type="GO" id="GO:0009507">
    <property type="term" value="C:chloroplast"/>
    <property type="evidence" value="ECO:0007669"/>
    <property type="project" value="UniProtKB-SubCell"/>
</dbReference>
<dbReference type="GO" id="GO:0005762">
    <property type="term" value="C:mitochondrial large ribosomal subunit"/>
    <property type="evidence" value="ECO:0007669"/>
    <property type="project" value="TreeGrafter"/>
</dbReference>
<dbReference type="GO" id="GO:0019843">
    <property type="term" value="F:rRNA binding"/>
    <property type="evidence" value="ECO:0007669"/>
    <property type="project" value="UniProtKB-UniRule"/>
</dbReference>
<dbReference type="GO" id="GO:0003735">
    <property type="term" value="F:structural constituent of ribosome"/>
    <property type="evidence" value="ECO:0007669"/>
    <property type="project" value="InterPro"/>
</dbReference>
<dbReference type="GO" id="GO:0016740">
    <property type="term" value="F:transferase activity"/>
    <property type="evidence" value="ECO:0007669"/>
    <property type="project" value="InterPro"/>
</dbReference>
<dbReference type="GO" id="GO:0032543">
    <property type="term" value="P:mitochondrial translation"/>
    <property type="evidence" value="ECO:0007669"/>
    <property type="project" value="TreeGrafter"/>
</dbReference>
<dbReference type="FunFam" id="2.30.30.30:FF:000001">
    <property type="entry name" value="50S ribosomal protein L2"/>
    <property type="match status" value="1"/>
</dbReference>
<dbReference type="FunFam" id="2.40.50.140:FF:000003">
    <property type="entry name" value="50S ribosomal protein L2"/>
    <property type="match status" value="1"/>
</dbReference>
<dbReference type="FunFam" id="4.10.950.10:FF:000001">
    <property type="entry name" value="50S ribosomal protein L2"/>
    <property type="match status" value="1"/>
</dbReference>
<dbReference type="Gene3D" id="2.30.30.30">
    <property type="match status" value="1"/>
</dbReference>
<dbReference type="Gene3D" id="2.40.50.140">
    <property type="entry name" value="Nucleic acid-binding proteins"/>
    <property type="match status" value="1"/>
</dbReference>
<dbReference type="Gene3D" id="4.10.950.10">
    <property type="entry name" value="Ribosomal protein L2, domain 3"/>
    <property type="match status" value="1"/>
</dbReference>
<dbReference type="HAMAP" id="MF_01320_B">
    <property type="entry name" value="Ribosomal_uL2_B"/>
    <property type="match status" value="1"/>
</dbReference>
<dbReference type="InterPro" id="IPR012340">
    <property type="entry name" value="NA-bd_OB-fold"/>
</dbReference>
<dbReference type="InterPro" id="IPR014722">
    <property type="entry name" value="Rib_uL2_dom2"/>
</dbReference>
<dbReference type="InterPro" id="IPR002171">
    <property type="entry name" value="Ribosomal_uL2"/>
</dbReference>
<dbReference type="InterPro" id="IPR005880">
    <property type="entry name" value="Ribosomal_uL2_bac/org-type"/>
</dbReference>
<dbReference type="InterPro" id="IPR022669">
    <property type="entry name" value="Ribosomal_uL2_C"/>
</dbReference>
<dbReference type="InterPro" id="IPR022671">
    <property type="entry name" value="Ribosomal_uL2_CS"/>
</dbReference>
<dbReference type="InterPro" id="IPR014726">
    <property type="entry name" value="Ribosomal_uL2_dom3"/>
</dbReference>
<dbReference type="InterPro" id="IPR022666">
    <property type="entry name" value="Ribosomal_uL2_RNA-bd_dom"/>
</dbReference>
<dbReference type="InterPro" id="IPR008991">
    <property type="entry name" value="Translation_prot_SH3-like_sf"/>
</dbReference>
<dbReference type="NCBIfam" id="TIGR01171">
    <property type="entry name" value="rplB_bact"/>
    <property type="match status" value="1"/>
</dbReference>
<dbReference type="PANTHER" id="PTHR13691:SF5">
    <property type="entry name" value="LARGE RIBOSOMAL SUBUNIT PROTEIN UL2M"/>
    <property type="match status" value="1"/>
</dbReference>
<dbReference type="PANTHER" id="PTHR13691">
    <property type="entry name" value="RIBOSOMAL PROTEIN L2"/>
    <property type="match status" value="1"/>
</dbReference>
<dbReference type="Pfam" id="PF00181">
    <property type="entry name" value="Ribosomal_L2"/>
    <property type="match status" value="1"/>
</dbReference>
<dbReference type="Pfam" id="PF03947">
    <property type="entry name" value="Ribosomal_L2_C"/>
    <property type="match status" value="1"/>
</dbReference>
<dbReference type="PIRSF" id="PIRSF002158">
    <property type="entry name" value="Ribosomal_L2"/>
    <property type="match status" value="1"/>
</dbReference>
<dbReference type="SMART" id="SM01383">
    <property type="entry name" value="Ribosomal_L2"/>
    <property type="match status" value="1"/>
</dbReference>
<dbReference type="SMART" id="SM01382">
    <property type="entry name" value="Ribosomal_L2_C"/>
    <property type="match status" value="1"/>
</dbReference>
<dbReference type="SUPFAM" id="SSF50249">
    <property type="entry name" value="Nucleic acid-binding proteins"/>
    <property type="match status" value="1"/>
</dbReference>
<dbReference type="SUPFAM" id="SSF50104">
    <property type="entry name" value="Translation proteins SH3-like domain"/>
    <property type="match status" value="1"/>
</dbReference>
<dbReference type="PROSITE" id="PS00467">
    <property type="entry name" value="RIBOSOMAL_L2"/>
    <property type="match status" value="1"/>
</dbReference>
<name>RK2_PYRYE</name>
<reference key="1">
    <citation type="submission" date="2003-11" db="EMBL/GenBank/DDBJ databases">
        <title>Whole genome sequence of Porphyra yezoensis chloroplast.</title>
        <authorList>
            <person name="Kunimoto M."/>
            <person name="Morishima K."/>
            <person name="Yoshikawa M."/>
            <person name="Fukuda S."/>
            <person name="Kobayashi T."/>
            <person name="Kobayashi M."/>
            <person name="Okazaki T."/>
            <person name="Ohara I."/>
            <person name="Nakayama I."/>
        </authorList>
    </citation>
    <scope>NUCLEOTIDE SEQUENCE [LARGE SCALE GENOMIC DNA]</scope>
    <source>
        <strain>U-51</strain>
    </source>
</reference>
<organism>
    <name type="scientific">Pyropia yezoensis</name>
    <name type="common">Susabi-nori</name>
    <name type="synonym">Porphyra yezoensis</name>
    <dbReference type="NCBI Taxonomy" id="2788"/>
    <lineage>
        <taxon>Eukaryota</taxon>
        <taxon>Rhodophyta</taxon>
        <taxon>Bangiophyceae</taxon>
        <taxon>Bangiales</taxon>
        <taxon>Bangiaceae</taxon>
        <taxon>Pyropia</taxon>
    </lineage>
</organism>
<geneLocation type="chloroplast"/>
<protein>
    <recommendedName>
        <fullName evidence="2">Large ribosomal subunit protein uL2c</fullName>
    </recommendedName>
    <alternativeName>
        <fullName evidence="4">50S ribosomal protein L2, chloroplastic</fullName>
    </alternativeName>
</protein>
<comment type="subunit">
    <text evidence="1">Part of the 50S ribosomal subunit.</text>
</comment>
<comment type="subcellular location">
    <subcellularLocation>
        <location>Plastid</location>
        <location>Chloroplast</location>
    </subcellularLocation>
</comment>
<comment type="similarity">
    <text evidence="4">Belongs to the universal ribosomal protein uL2 family.</text>
</comment>
<feature type="chain" id="PRO_0000237283" description="Large ribosomal subunit protein uL2c">
    <location>
        <begin position="1"/>
        <end position="293"/>
    </location>
</feature>
<feature type="region of interest" description="Disordered" evidence="3">
    <location>
        <begin position="224"/>
        <end position="245"/>
    </location>
</feature>